<keyword id="KW-0045">Antibiotic biosynthesis</keyword>
<keyword id="KW-0119">Carbohydrate metabolism</keyword>
<keyword id="KW-0413">Isomerase</keyword>
<sequence>MHPLSIEGAWSQEPVIHSDHRGRSHEWFRGERFRQTFGHDFPVAQVNVAVSHRGALRGIHYTEIPPGQAKYSVCVRGAGLDVIVDVRIGSPTFGRWEIVPMDAERNTAVYLAAGLGRAFLSLTDDATLVYLCSSGYAPEREHSVNPLDPDLGIVWPADIEPLLSDRDKNAPTLATAERLGLLPTYQAWQEQQQAKA</sequence>
<organism>
    <name type="scientific">Streptomyces sp</name>
    <dbReference type="NCBI Taxonomy" id="1931"/>
    <lineage>
        <taxon>Bacteria</taxon>
        <taxon>Bacillati</taxon>
        <taxon>Actinomycetota</taxon>
        <taxon>Actinomycetes</taxon>
        <taxon>Kitasatosporales</taxon>
        <taxon>Streptomycetaceae</taxon>
        <taxon>Streptomyces</taxon>
    </lineage>
</organism>
<proteinExistence type="evidence at protein level"/>
<comment type="function">
    <text evidence="3 4">Involved in the biosynthesis of dTDP-6-deoxy-D-allose, an intermediate in the biosynthesis of mycinose, which is one of the two unusual sugars attached to the 16-membered macrolactone ring of the aglycone antibiotic dihydrochalcomycin (GERI-155). Catalyzes the conversion of dTDP-4-oxo-6-deoxyglucose to dTDP-4-oxo-6-deoxyallose, via a C-3 epimerization.</text>
</comment>
<comment type="catalytic activity">
    <reaction evidence="4">
        <text>dTDP-4-dehydro-6-deoxy-alpha-D-glucose = dTDP-4-dehydro-6-deoxy-alpha-D-allose</text>
        <dbReference type="Rhea" id="RHEA:36971"/>
        <dbReference type="ChEBI" id="CHEBI:57649"/>
        <dbReference type="ChEBI" id="CHEBI:76253"/>
        <dbReference type="EC" id="5.1.3.27"/>
    </reaction>
</comment>
<comment type="pathway">
    <text evidence="7">Antibiotic biosynthesis.</text>
</comment>
<comment type="subunit">
    <text evidence="1">Homodimer.</text>
</comment>
<comment type="similarity">
    <text evidence="6">Belongs to the dTDP-4-dehydrorhamnose 3,5-epimerase family.</text>
</comment>
<dbReference type="EC" id="5.1.3.27" evidence="4"/>
<dbReference type="EMBL" id="AY118081">
    <property type="protein sequence ID" value="ABB52524.1"/>
    <property type="molecule type" value="Genomic_DNA"/>
</dbReference>
<dbReference type="SMR" id="Q331R1"/>
<dbReference type="KEGG" id="ag:ABB52524"/>
<dbReference type="BioCyc" id="MetaCyc:MONOMER-18349"/>
<dbReference type="BRENDA" id="5.1.3.27">
    <property type="organism ID" value="1284"/>
</dbReference>
<dbReference type="GO" id="GO:0005829">
    <property type="term" value="C:cytosol"/>
    <property type="evidence" value="ECO:0007669"/>
    <property type="project" value="TreeGrafter"/>
</dbReference>
<dbReference type="GO" id="GO:0008830">
    <property type="term" value="F:dTDP-4-dehydrorhamnose 3,5-epimerase activity"/>
    <property type="evidence" value="ECO:0007669"/>
    <property type="project" value="InterPro"/>
</dbReference>
<dbReference type="GO" id="GO:0017000">
    <property type="term" value="P:antibiotic biosynthetic process"/>
    <property type="evidence" value="ECO:0007669"/>
    <property type="project" value="UniProtKB-KW"/>
</dbReference>
<dbReference type="GO" id="GO:0019305">
    <property type="term" value="P:dTDP-rhamnose biosynthetic process"/>
    <property type="evidence" value="ECO:0007669"/>
    <property type="project" value="TreeGrafter"/>
</dbReference>
<dbReference type="GO" id="GO:0000271">
    <property type="term" value="P:polysaccharide biosynthetic process"/>
    <property type="evidence" value="ECO:0007669"/>
    <property type="project" value="TreeGrafter"/>
</dbReference>
<dbReference type="CDD" id="cd00438">
    <property type="entry name" value="cupin_RmlC"/>
    <property type="match status" value="1"/>
</dbReference>
<dbReference type="Gene3D" id="2.60.120.10">
    <property type="entry name" value="Jelly Rolls"/>
    <property type="match status" value="1"/>
</dbReference>
<dbReference type="InterPro" id="IPR000888">
    <property type="entry name" value="RmlC-like"/>
</dbReference>
<dbReference type="InterPro" id="IPR014710">
    <property type="entry name" value="RmlC-like_jellyroll"/>
</dbReference>
<dbReference type="InterPro" id="IPR011051">
    <property type="entry name" value="RmlC_Cupin_sf"/>
</dbReference>
<dbReference type="PANTHER" id="PTHR21047">
    <property type="entry name" value="DTDP-6-DEOXY-D-GLUCOSE-3,5 EPIMERASE"/>
    <property type="match status" value="1"/>
</dbReference>
<dbReference type="PANTHER" id="PTHR21047:SF2">
    <property type="entry name" value="THYMIDINE DIPHOSPHO-4-KETO-RHAMNOSE 3,5-EPIMERASE"/>
    <property type="match status" value="1"/>
</dbReference>
<dbReference type="Pfam" id="PF00908">
    <property type="entry name" value="dTDP_sugar_isom"/>
    <property type="match status" value="1"/>
</dbReference>
<dbReference type="SUPFAM" id="SSF51182">
    <property type="entry name" value="RmlC-like cupins"/>
    <property type="match status" value="1"/>
</dbReference>
<gene>
    <name evidence="5" type="primary">gerF</name>
</gene>
<evidence type="ECO:0000250" key="1">
    <source>
        <dbReference type="UniProtKB" id="Q5SFD1"/>
    </source>
</evidence>
<evidence type="ECO:0000250" key="2">
    <source>
        <dbReference type="UniProtKB" id="Q9HU21"/>
    </source>
</evidence>
<evidence type="ECO:0000269" key="3">
    <source>
    </source>
</evidence>
<evidence type="ECO:0000269" key="4">
    <source>
    </source>
</evidence>
<evidence type="ECO:0000303" key="5">
    <source>
    </source>
</evidence>
<evidence type="ECO:0000305" key="6"/>
<evidence type="ECO:0000305" key="7">
    <source>
    </source>
</evidence>
<name>GERF_STRSQ</name>
<feature type="chain" id="PRO_0000425105" description="dTDP-4-dehydro-6-deoxyglucose 3-epimerase">
    <location>
        <begin position="1"/>
        <end position="196"/>
    </location>
</feature>
<feature type="active site" description="Proton acceptor" evidence="2">
    <location>
        <position position="60"/>
    </location>
</feature>
<feature type="active site" description="Proton donor" evidence="2">
    <location>
        <position position="130"/>
    </location>
</feature>
<feature type="binding site" evidence="2">
    <location>
        <position position="21"/>
    </location>
    <ligand>
        <name>substrate</name>
    </ligand>
</feature>
<feature type="binding site" evidence="2">
    <location>
        <position position="26"/>
    </location>
    <ligand>
        <name>substrate</name>
    </ligand>
</feature>
<feature type="binding site" evidence="2">
    <location>
        <begin position="45"/>
        <end position="47"/>
    </location>
    <ligand>
        <name>substrate</name>
    </ligand>
</feature>
<feature type="binding site" evidence="2">
    <location>
        <position position="57"/>
    </location>
    <ligand>
        <name>substrate</name>
    </ligand>
</feature>
<feature type="binding site" evidence="2">
    <location>
        <position position="70"/>
    </location>
    <ligand>
        <name>substrate</name>
    </ligand>
</feature>
<feature type="binding site" evidence="1">
    <location>
        <position position="117"/>
    </location>
    <ligand>
        <name>substrate</name>
    </ligand>
</feature>
<feature type="binding site" evidence="2">
    <location>
        <position position="141"/>
    </location>
    <ligand>
        <name>substrate</name>
    </ligand>
</feature>
<feature type="binding site" evidence="2">
    <location>
        <position position="166"/>
    </location>
    <ligand>
        <name>substrate</name>
    </ligand>
</feature>
<feature type="site" description="Participates in a stacking interaction with the thymidine ring of dTDP-4-oxo-6-deoxyglucose" evidence="1">
    <location>
        <position position="136"/>
    </location>
</feature>
<accession>Q331R1</accession>
<reference key="1">
    <citation type="journal article" date="2006" name="J. Microbiol. Biotechnol.">
        <title>Cloning and characterization of a gene cluster for the production of the polyketide macrolide antibiotic dihydrochalcomycin in Streptomyces sp. KCTC 0041BP.</title>
        <authorList>
            <person name="Jaishy B.P."/>
            <person name="Lim S.K."/>
            <person name="Yoo I.D."/>
            <person name="Yoo J.C."/>
            <person name="Sohng J.K."/>
            <person name="Nam D.H."/>
        </authorList>
    </citation>
    <scope>NUCLEOTIDE SEQUENCE [GENOMIC DNA]</scope>
    <source>
        <strain>KCTC 0041BP / GERI-155</strain>
    </source>
</reference>
<reference key="2">
    <citation type="journal article" date="2004" name="Biotechnol. Lett.">
        <title>Cloning, expression, and biological function of a dTDP-deoxyglucose epimerase (gerF) gene from Streptomyces sp. GERI-155.</title>
        <authorList>
            <person name="Sohng J.K."/>
            <person name="Kim H.J."/>
            <person name="Nam D.H."/>
            <person name="Lim D.O."/>
            <person name="Han J.M."/>
            <person name="Lee H.J."/>
            <person name="Yoo J.C."/>
        </authorList>
    </citation>
    <scope>FUNCTION</scope>
    <scope>GENE NAME</scope>
    <scope>PATHWAY</scope>
    <source>
        <strain>KCTC 0041BP / GERI-155</strain>
    </source>
</reference>
<reference key="3">
    <citation type="journal article" date="2007" name="Glycobiology">
        <title>Biosynthesis of dTDP-6-deoxy-beta-D-allose, biochemical characterization of dTDP-4-keto-6-deoxyglucose reductase (GerKI) from Streptomyces sp. KCTC 0041BP.</title>
        <authorList>
            <person name="Thuy T.T."/>
            <person name="Liou K."/>
            <person name="Oh T.J."/>
            <person name="Kim D.H."/>
            <person name="Nam D.H."/>
            <person name="Yoo J.C."/>
            <person name="Sohng J.K."/>
        </authorList>
    </citation>
    <scope>FUNCTION</scope>
    <scope>CATALYTIC ACTIVITY</scope>
    <source>
        <strain>KCTC 0041BP / GERI-155</strain>
    </source>
</reference>
<protein>
    <recommendedName>
        <fullName evidence="7">dTDP-4-dehydro-6-deoxyglucose 3-epimerase</fullName>
        <ecNumber evidence="4">5.1.3.27</ecNumber>
    </recommendedName>
    <alternativeName>
        <fullName evidence="7">dTDP-4-dehydro-6-deoxy-D-glucose 3-epimerase</fullName>
    </alternativeName>
    <alternativeName>
        <fullName evidence="7">dTDP-4-keto-6-deoxyglucose epimerase</fullName>
    </alternativeName>
    <alternativeName>
        <fullName evidence="7">dTDP-4-oxo-6-deoxy-D-glucose epimerase</fullName>
    </alternativeName>
</protein>